<protein>
    <recommendedName>
        <fullName>Presenilin-2</fullName>
        <shortName>PS-2</shortName>
        <ecNumber>3.4.23.-</ecNumber>
    </recommendedName>
    <component>
        <recommendedName>
            <fullName>Presenilin-2 NTF subunit</fullName>
        </recommendedName>
    </component>
    <component>
        <recommendedName>
            <fullName>Presenilin-2 CTF subunit</fullName>
        </recommendedName>
    </component>
</protein>
<feature type="chain" id="PRO_0000025601" description="Presenilin-2 NTF subunit" evidence="1">
    <location>
        <begin position="1"/>
        <end position="298"/>
    </location>
</feature>
<feature type="chain" id="PRO_0000025602" description="Presenilin-2 CTF subunit" evidence="1">
    <location>
        <begin position="299"/>
        <end position="449"/>
    </location>
</feature>
<feature type="topological domain" description="Cytoplasmic" evidence="4">
    <location>
        <begin position="1"/>
        <end position="88"/>
    </location>
</feature>
<feature type="transmembrane region" description="Helical" evidence="4">
    <location>
        <begin position="89"/>
        <end position="109"/>
    </location>
</feature>
<feature type="topological domain" description="Lumenal" evidence="4">
    <location>
        <begin position="110"/>
        <end position="139"/>
    </location>
</feature>
<feature type="transmembrane region" description="Helical" evidence="4">
    <location>
        <begin position="140"/>
        <end position="160"/>
    </location>
</feature>
<feature type="topological domain" description="Cytoplasmic" evidence="4">
    <location>
        <begin position="161"/>
        <end position="167"/>
    </location>
</feature>
<feature type="transmembrane region" description="Helical" evidence="4">
    <location>
        <begin position="168"/>
        <end position="188"/>
    </location>
</feature>
<feature type="topological domain" description="Lumenal" evidence="4">
    <location>
        <begin position="189"/>
        <end position="201"/>
    </location>
</feature>
<feature type="transmembrane region" description="Helical" evidence="4">
    <location>
        <begin position="202"/>
        <end position="222"/>
    </location>
</feature>
<feature type="topological domain" description="Cytoplasmic" evidence="4">
    <location>
        <begin position="223"/>
        <end position="224"/>
    </location>
</feature>
<feature type="transmembrane region" description="Helical" evidence="4">
    <location>
        <begin position="225"/>
        <end position="245"/>
    </location>
</feature>
<feature type="topological domain" description="Lumenal" evidence="4">
    <location>
        <begin position="246"/>
        <end position="250"/>
    </location>
</feature>
<feature type="transmembrane region" description="Helical" evidence="4">
    <location>
        <begin position="251"/>
        <end position="271"/>
    </location>
</feature>
<feature type="topological domain" description="Cytoplasmic" evidence="4">
    <location>
        <begin position="272"/>
        <end position="362"/>
    </location>
</feature>
<feature type="transmembrane region" description="Helical" evidence="4">
    <location>
        <begin position="363"/>
        <end position="383"/>
    </location>
</feature>
<feature type="topological domain" description="Lumenal" evidence="4">
    <location>
        <begin position="384"/>
        <end position="389"/>
    </location>
</feature>
<feature type="transmembrane region" description="Helical" evidence="4">
    <location>
        <begin position="390"/>
        <end position="410"/>
    </location>
</feature>
<feature type="topological domain" description="Cytoplasmic" evidence="4">
    <location>
        <begin position="411"/>
        <end position="414"/>
    </location>
</feature>
<feature type="intramembrane region" description="Helical" evidence="4">
    <location>
        <begin position="415"/>
        <end position="435"/>
    </location>
</feature>
<feature type="topological domain" description="Cytoplasmic" evidence="4">
    <location>
        <begin position="436"/>
        <end position="449"/>
    </location>
</feature>
<feature type="region of interest" description="Disordered" evidence="5">
    <location>
        <begin position="1"/>
        <end position="71"/>
    </location>
</feature>
<feature type="short sequence motif" description="PAL">
    <location>
        <begin position="415"/>
        <end position="417"/>
    </location>
</feature>
<feature type="compositionally biased region" description="Polar residues" evidence="5">
    <location>
        <begin position="19"/>
        <end position="30"/>
    </location>
</feature>
<feature type="compositionally biased region" description="Acidic residues" evidence="5">
    <location>
        <begin position="52"/>
        <end position="61"/>
    </location>
</feature>
<feature type="active site" evidence="1">
    <location>
        <position position="264"/>
    </location>
</feature>
<feature type="active site" evidence="1">
    <location>
        <position position="367"/>
    </location>
</feature>
<feature type="modified residue" description="Phosphoserine" evidence="2">
    <location>
        <position position="22"/>
    </location>
</feature>
<feature type="modified residue" description="Phosphoserine" evidence="2">
    <location>
        <position position="25"/>
    </location>
</feature>
<feature type="modified residue" description="Phosphoserine" evidence="3">
    <location>
        <position position="30"/>
    </location>
</feature>
<feature type="modified residue" description="Phosphoserine" evidence="3">
    <location>
        <position position="52"/>
    </location>
</feature>
<feature type="sequence conflict" description="In Ref. 1; AAD39024." evidence="6" ref="1">
    <original>T</original>
    <variation>M</variation>
    <location>
        <position position="381"/>
    </location>
</feature>
<dbReference type="EC" id="3.4.23.-"/>
<dbReference type="EMBL" id="AF038937">
    <property type="protein sequence ID" value="AAD39024.1"/>
    <property type="molecule type" value="mRNA"/>
</dbReference>
<dbReference type="EMBL" id="BC112811">
    <property type="protein sequence ID" value="AAI12812.1"/>
    <property type="molecule type" value="mRNA"/>
</dbReference>
<dbReference type="RefSeq" id="NP_776865.2">
    <property type="nucleotide sequence ID" value="NM_174440.4"/>
</dbReference>
<dbReference type="RefSeq" id="XP_005216851.1">
    <property type="nucleotide sequence ID" value="XM_005216794.5"/>
</dbReference>
<dbReference type="RefSeq" id="XP_010811413.1">
    <property type="nucleotide sequence ID" value="XM_010813111.4"/>
</dbReference>
<dbReference type="RefSeq" id="XP_010811414.1">
    <property type="nucleotide sequence ID" value="XM_010813112.4"/>
</dbReference>
<dbReference type="RefSeq" id="XP_010811415.1">
    <property type="nucleotide sequence ID" value="XM_010813113.4"/>
</dbReference>
<dbReference type="RefSeq" id="XP_010811416.1">
    <property type="nucleotide sequence ID" value="XM_010813114.4"/>
</dbReference>
<dbReference type="SMR" id="Q9XT96"/>
<dbReference type="FunCoup" id="Q9XT96">
    <property type="interactions" value="938"/>
</dbReference>
<dbReference type="STRING" id="9913.ENSBTAP00000057595"/>
<dbReference type="MEROPS" id="A22.002"/>
<dbReference type="PaxDb" id="9913-ENSBTAP00000017565"/>
<dbReference type="Ensembl" id="ENSBTAT00000017565.7">
    <property type="protein sequence ID" value="ENSBTAP00000017565.5"/>
    <property type="gene ID" value="ENSBTAG00000013197.7"/>
</dbReference>
<dbReference type="GeneID" id="282010"/>
<dbReference type="KEGG" id="bta:282010"/>
<dbReference type="CTD" id="5664"/>
<dbReference type="VEuPathDB" id="HostDB:ENSBTAG00000013197"/>
<dbReference type="VGNC" id="VGNC:33435">
    <property type="gene designation" value="PSEN2"/>
</dbReference>
<dbReference type="eggNOG" id="KOG2736">
    <property type="taxonomic scope" value="Eukaryota"/>
</dbReference>
<dbReference type="GeneTree" id="ENSGT00940000157923"/>
<dbReference type="HOGENOM" id="CLU_022975_3_1_1"/>
<dbReference type="InParanoid" id="Q9XT96"/>
<dbReference type="OMA" id="TTNLMMF"/>
<dbReference type="OrthoDB" id="20287at2759"/>
<dbReference type="TreeFam" id="TF315040"/>
<dbReference type="Reactome" id="R-BTA-1251985">
    <property type="pathway name" value="Nuclear signaling by ERBB4"/>
</dbReference>
<dbReference type="Reactome" id="R-BTA-193692">
    <property type="pathway name" value="Regulated proteolysis of p75NTR"/>
</dbReference>
<dbReference type="Reactome" id="R-BTA-205043">
    <property type="pathway name" value="NRIF signals cell death from the nucleus"/>
</dbReference>
<dbReference type="Reactome" id="R-BTA-3928665">
    <property type="pathway name" value="EPH-ephrin mediated repulsion of cells"/>
</dbReference>
<dbReference type="Reactome" id="R-BTA-9839383">
    <property type="pathway name" value="TGFBR3 PTM regulation"/>
</dbReference>
<dbReference type="Proteomes" id="UP000009136">
    <property type="component" value="Chromosome 16"/>
</dbReference>
<dbReference type="Bgee" id="ENSBTAG00000013197">
    <property type="expression patterns" value="Expressed in thyroid gland and 104 other cell types or tissues"/>
</dbReference>
<dbReference type="GO" id="GO:0005813">
    <property type="term" value="C:centrosome"/>
    <property type="evidence" value="ECO:0007669"/>
    <property type="project" value="Ensembl"/>
</dbReference>
<dbReference type="GO" id="GO:0005789">
    <property type="term" value="C:endoplasmic reticulum membrane"/>
    <property type="evidence" value="ECO:0007669"/>
    <property type="project" value="UniProtKB-SubCell"/>
</dbReference>
<dbReference type="GO" id="GO:0070765">
    <property type="term" value="C:gamma-secretase complex"/>
    <property type="evidence" value="ECO:0000318"/>
    <property type="project" value="GO_Central"/>
</dbReference>
<dbReference type="GO" id="GO:0000139">
    <property type="term" value="C:Golgi membrane"/>
    <property type="evidence" value="ECO:0007669"/>
    <property type="project" value="UniProtKB-SubCell"/>
</dbReference>
<dbReference type="GO" id="GO:0000776">
    <property type="term" value="C:kinetochore"/>
    <property type="evidence" value="ECO:0007669"/>
    <property type="project" value="Ensembl"/>
</dbReference>
<dbReference type="GO" id="GO:0005637">
    <property type="term" value="C:nuclear inner membrane"/>
    <property type="evidence" value="ECO:0007669"/>
    <property type="project" value="Ensembl"/>
</dbReference>
<dbReference type="GO" id="GO:0042500">
    <property type="term" value="F:aspartic endopeptidase activity, intramembrane cleaving"/>
    <property type="evidence" value="ECO:0000318"/>
    <property type="project" value="GO_Central"/>
</dbReference>
<dbReference type="GO" id="GO:0034205">
    <property type="term" value="P:amyloid-beta formation"/>
    <property type="evidence" value="ECO:0000318"/>
    <property type="project" value="GO_Central"/>
</dbReference>
<dbReference type="GO" id="GO:0055074">
    <property type="term" value="P:calcium ion homeostasis"/>
    <property type="evidence" value="ECO:0000318"/>
    <property type="project" value="GO_Central"/>
</dbReference>
<dbReference type="GO" id="GO:0035556">
    <property type="term" value="P:intracellular signal transduction"/>
    <property type="evidence" value="ECO:0007669"/>
    <property type="project" value="InterPro"/>
</dbReference>
<dbReference type="GO" id="GO:0006509">
    <property type="term" value="P:membrane protein ectodomain proteolysis"/>
    <property type="evidence" value="ECO:0000318"/>
    <property type="project" value="GO_Central"/>
</dbReference>
<dbReference type="GO" id="GO:1990456">
    <property type="term" value="P:mitochondrion-endoplasmic reticulum membrane tethering"/>
    <property type="evidence" value="ECO:0000250"/>
    <property type="project" value="UniProtKB"/>
</dbReference>
<dbReference type="GO" id="GO:0007219">
    <property type="term" value="P:Notch signaling pathway"/>
    <property type="evidence" value="ECO:0000318"/>
    <property type="project" value="GO_Central"/>
</dbReference>
<dbReference type="GO" id="GO:0016485">
    <property type="term" value="P:protein processing"/>
    <property type="evidence" value="ECO:0000318"/>
    <property type="project" value="GO_Central"/>
</dbReference>
<dbReference type="GO" id="GO:0110097">
    <property type="term" value="P:regulation of calcium import into the mitochondrion"/>
    <property type="evidence" value="ECO:0000250"/>
    <property type="project" value="UniProtKB"/>
</dbReference>
<dbReference type="FunFam" id="1.10.472.100:FF:000001">
    <property type="entry name" value="Presenilin"/>
    <property type="match status" value="1"/>
</dbReference>
<dbReference type="Gene3D" id="1.10.472.100">
    <property type="entry name" value="Presenilin"/>
    <property type="match status" value="1"/>
</dbReference>
<dbReference type="InterPro" id="IPR001493">
    <property type="entry name" value="Pept_A22A_PS2"/>
</dbReference>
<dbReference type="InterPro" id="IPR001108">
    <property type="entry name" value="Peptidase_A22A"/>
</dbReference>
<dbReference type="InterPro" id="IPR006639">
    <property type="entry name" value="Preselin/SPP"/>
</dbReference>
<dbReference type="InterPro" id="IPR042524">
    <property type="entry name" value="Presenilin_C"/>
</dbReference>
<dbReference type="PANTHER" id="PTHR10202">
    <property type="entry name" value="PRESENILIN"/>
    <property type="match status" value="1"/>
</dbReference>
<dbReference type="PANTHER" id="PTHR10202:SF24">
    <property type="entry name" value="PRESENILIN-2"/>
    <property type="match status" value="1"/>
</dbReference>
<dbReference type="Pfam" id="PF01080">
    <property type="entry name" value="Presenilin"/>
    <property type="match status" value="2"/>
</dbReference>
<dbReference type="PRINTS" id="PR01072">
    <property type="entry name" value="PRESENILIN"/>
</dbReference>
<dbReference type="PRINTS" id="PR01074">
    <property type="entry name" value="PRESENILIN2"/>
</dbReference>
<dbReference type="SMART" id="SM00730">
    <property type="entry name" value="PSN"/>
    <property type="match status" value="1"/>
</dbReference>
<comment type="function">
    <text evidence="2">Probable catalytic subunit of the gamma-secretase complex, an endoprotease complex that catalyzes the intramembrane cleavage of integral membrane proteins such as Notch receptors and APP (amyloid-beta precursor protein). Requires the other members of the gamma-secretase complex to have a protease activity. May play a role in intracellular signaling and gene expression or in linking chromatin to the nuclear membrane. May function in the cytoplasmic partitioning of proteins. The holoprotein functions as a calcium-leak channel that allows the passive movement of calcium from endoplasmic reticulum to cytosol and is involved in calcium homeostasis. Is a regulator of mitochondrion-endoplasmic reticulum membrane tethering and modulates calcium ions shuttling between ER and mitochondria.</text>
</comment>
<comment type="subunit">
    <text evidence="1">Homodimer. Component of the gamma-secretase complex, a complex composed of a presenilin homodimer (PSEN1 or PSEN2), nicastrin (NCSTN), APH1 (APH1A or APH1B) and PEN2. Such minimal complex is sufficient for secretase activity, although other components may exist. Interacts with DOCK3. Interacts with HERPUD1, FLNA and FLNB (By similarity).</text>
</comment>
<comment type="subcellular location">
    <subcellularLocation>
        <location evidence="1">Endoplasmic reticulum membrane</location>
        <topology evidence="1">Multi-pass membrane protein</topology>
    </subcellularLocation>
    <subcellularLocation>
        <location evidence="1">Golgi apparatus membrane</location>
        <topology evidence="1">Multi-pass membrane protein</topology>
    </subcellularLocation>
</comment>
<comment type="domain">
    <text evidence="1">The PAL motif is required for normal active site conformation.</text>
</comment>
<comment type="PTM">
    <text evidence="1">Phosphorylated on serine residues.</text>
</comment>
<comment type="similarity">
    <text evidence="6">Belongs to the peptidase A22A family.</text>
</comment>
<proteinExistence type="evidence at transcript level"/>
<keyword id="KW-0256">Endoplasmic reticulum</keyword>
<keyword id="KW-0333">Golgi apparatus</keyword>
<keyword id="KW-0378">Hydrolase</keyword>
<keyword id="KW-0472">Membrane</keyword>
<keyword id="KW-0914">Notch signaling pathway</keyword>
<keyword id="KW-0597">Phosphoprotein</keyword>
<keyword id="KW-0645">Protease</keyword>
<keyword id="KW-1185">Reference proteome</keyword>
<keyword id="KW-0812">Transmembrane</keyword>
<keyword id="KW-1133">Transmembrane helix</keyword>
<accession>Q9XT96</accession>
<accession>Q2KI10</accession>
<name>PSN2_BOVIN</name>
<evidence type="ECO:0000250" key="1"/>
<evidence type="ECO:0000250" key="2">
    <source>
        <dbReference type="UniProtKB" id="P49810"/>
    </source>
</evidence>
<evidence type="ECO:0000250" key="3">
    <source>
        <dbReference type="UniProtKB" id="Q61144"/>
    </source>
</evidence>
<evidence type="ECO:0000255" key="4"/>
<evidence type="ECO:0000256" key="5">
    <source>
        <dbReference type="SAM" id="MobiDB-lite"/>
    </source>
</evidence>
<evidence type="ECO:0000305" key="6"/>
<reference key="1">
    <citation type="submission" date="1997-12" db="EMBL/GenBank/DDBJ databases">
        <title>Molecular cloning of bovine presenilin 2 gene.</title>
        <authorList>
            <person name="Sahara N."/>
            <person name="Shirasawa T."/>
            <person name="Mori H."/>
        </authorList>
    </citation>
    <scope>NUCLEOTIDE SEQUENCE [MRNA]</scope>
    <source>
        <tissue>Brain</tissue>
    </source>
</reference>
<reference key="2">
    <citation type="submission" date="2006-01" db="EMBL/GenBank/DDBJ databases">
        <authorList>
            <consortium name="NIH - Mammalian Gene Collection (MGC) project"/>
        </authorList>
    </citation>
    <scope>NUCLEOTIDE SEQUENCE [LARGE SCALE MRNA]</scope>
    <source>
        <strain>Hereford</strain>
        <tissue>Heart ventricle</tissue>
    </source>
</reference>
<gene>
    <name type="primary">PSEN2</name>
</gene>
<sequence>MLTFMASDSEEEVCDERTSLMSAESPTPRSCQDGRQGLEDGESAAQWRSQESEEDHEEEDPDRYVCSGVPGRPPGLEEELTLKYGAKHVIMLFVPVTLCMIVVVATIKSVRFYTEKNGQLIYTPFSEDTPSVGQRLLNSVLNTLIMISVIVTMTIFLVVLYKYRCYKFIHGWLIMSSLMLLFLFTYIYLGEVLKTYNVAMDYPTLFLTVWNFGAVGMVCIHWKGPLVLQQAYLIMISALMALVFIKYLPEWSAWVILGAISVYDLVAVLCPKGPLRMLVETAQERNEPIFPALIYSSAMVWTVGMAKLDPSSQGALQLPYDPEMEEDSYDSFGEPSYPDVFEPPLPGYPGEELEEEEERGVKLGLGDFIFYSVLVGKAAATGSGDWNTTLACFVAILIGLCLTLLLLAVFKKALPALPISITFGLIFYFSTDNLVRPFMDTLASHQLYI</sequence>
<organism>
    <name type="scientific">Bos taurus</name>
    <name type="common">Bovine</name>
    <dbReference type="NCBI Taxonomy" id="9913"/>
    <lineage>
        <taxon>Eukaryota</taxon>
        <taxon>Metazoa</taxon>
        <taxon>Chordata</taxon>
        <taxon>Craniata</taxon>
        <taxon>Vertebrata</taxon>
        <taxon>Euteleostomi</taxon>
        <taxon>Mammalia</taxon>
        <taxon>Eutheria</taxon>
        <taxon>Laurasiatheria</taxon>
        <taxon>Artiodactyla</taxon>
        <taxon>Ruminantia</taxon>
        <taxon>Pecora</taxon>
        <taxon>Bovidae</taxon>
        <taxon>Bovinae</taxon>
        <taxon>Bos</taxon>
    </lineage>
</organism>